<sequence>MSEEAVALVVDNGSGMVKSGLAGDDAPKCVFPSIVGRPKMPNIMIGMEQKECYVGDEAQNKRGILTLKYPIEHGIVTNWDDMEKIWHHTFYNELRVSPEEHPVLLTEAPLNPKTNREKMTQIMFETFDVPAMYVSIQAILSLYASGRTTGIVLDSGDGVSHTVPIYEGYVLPHAINRIDMAGRDLTYHMMKLFTERGHTFTTTAEREIVRDIKEKLCYIAMDYDEELKRSEEHSDEIEEIYELPDGNLITVGSERFRCPEALFNPTLIGRECPGLHITAYQSIMKCDIDIRKELYNNIVLSGGTTMYNNIGERLTKEMTNLAPSSMKIKVIAPPERKYSVWIGGSILSSLSTFQQMWITKEEYEDSGPSIVHRKCF</sequence>
<name>ACT2_PLAFX</name>
<comment type="function">
    <text evidence="1">Actin is a highly conserved protein that polymerizes to produce filaments that form cross-linked networks in the cytoplasm. Polymerizes into longer and more stable actin filaments compared to ACT1/actin-1. Has ATPase activity. ATP hydrolysis leads to the formation of a stable intermediate ADP-inorganic phosphate (Pi) actin, which is followed by the release of Pi. ATP hydrolysis affects filament stability; ADP-bound actin depolymerizes much faster than ATP- or ADP-Pi-bound actin. Plays an essential role in male gametocyte development in the mosquito midgut, functioning in several processes including male gametocyte egress from host erythrocytes, formation of a beating flagellum and relocalization of ACT1/actin-1 to the cytoplasm. On the basal side of the mosquito midgut epithelium, required for the development of ookinetes into sporogonic oocysts.</text>
</comment>
<comment type="catalytic activity">
    <reaction evidence="1">
        <text>ATP + H2O = ADP + phosphate + H(+)</text>
        <dbReference type="Rhea" id="RHEA:13065"/>
        <dbReference type="ChEBI" id="CHEBI:15377"/>
        <dbReference type="ChEBI" id="CHEBI:15378"/>
        <dbReference type="ChEBI" id="CHEBI:30616"/>
        <dbReference type="ChEBI" id="CHEBI:43474"/>
        <dbReference type="ChEBI" id="CHEBI:456216"/>
    </reaction>
</comment>
<comment type="activity regulation">
    <text evidence="1">ATP hydrolysis occurs in the polymeric state. Unlike for mammalian actin, ATP hydrolysis also occurs in the monomeric form and the release of inorganic phosphate (Pi) is more efficient.</text>
</comment>
<comment type="subunit">
    <text evidence="1">Monomer (G-actin). Oligomer (F-actin). Polymerization of globular actin (G-actin) leads to a structural filament (F-actin) in the form of a two-stranded helix. Unlike for mammalian monomeric actin, monomeric actin is able to induce oligomerization with ATP or ADP. Mg(2+), which is used to coordinate ATP, is required for polymerization.</text>
</comment>
<comment type="subcellular location">
    <subcellularLocation>
        <location evidence="1">Cytoplasm</location>
    </subcellularLocation>
    <subcellularLocation>
        <location evidence="2">Cytoplasm</location>
        <location evidence="2">Cytoskeleton</location>
    </subcellularLocation>
    <text evidence="1">Prior to gametocyte activation in the mosquito midgut, localizes to the cytoplasm. Following gametocyte activation, localizes to a ring around the nucleus.</text>
</comment>
<comment type="miscellaneous">
    <text evidence="1">ACT1 and ACT2 differ in their polymerization, filament stability and helical structure. Unlike mammalian actin, Apicomplexa actins do not form long and stable filaments.</text>
</comment>
<comment type="similarity">
    <text evidence="3">Belongs to the actin family.</text>
</comment>
<reference evidence="4" key="1">
    <citation type="submission" date="2006-03" db="EMBL/GenBank/DDBJ databases">
        <title>The genome sequence of the Plasmodium falciparum HB3.</title>
        <authorList>
            <consortium name="The Broad Institute Genome Sequencing Platform"/>
            <person name="Birren B."/>
            <person name="Lander E."/>
            <person name="Galagan J."/>
            <person name="Nusbaum C."/>
            <person name="Devon K."/>
            <person name="Henn M."/>
            <person name="Jaffe D."/>
            <person name="Butler J."/>
            <person name="Alvarez P."/>
            <person name="Gnerre S."/>
            <person name="Grabherr M."/>
            <person name="Kleber M."/>
            <person name="Mauceli E."/>
            <person name="Brockman W."/>
            <person name="MacCallum I.A."/>
            <person name="Rounsley S."/>
            <person name="Young S."/>
            <person name="LaButti K."/>
            <person name="Pushparaj V."/>
            <person name="DeCaprio D."/>
            <person name="Crawford M."/>
            <person name="Koehrsen M."/>
            <person name="Engels R."/>
            <person name="Montgomery P."/>
            <person name="Pearson M."/>
            <person name="Howarth C."/>
            <person name="Larson L."/>
            <person name="Luoma S."/>
            <person name="White J."/>
            <person name="Kodira C."/>
            <person name="Zeng Q."/>
            <person name="Oleary S."/>
            <person name="Yandava C."/>
            <person name="Alvarado L."/>
            <person name="Wirth D."/>
            <person name="Volkman S."/>
            <person name="Hartl D."/>
        </authorList>
    </citation>
    <scope>NUCLEOTIDE SEQUENCE [LARGE SCALE GENOMIC DNA]</scope>
</reference>
<keyword id="KW-0002">3D-structure</keyword>
<keyword id="KW-0067">ATP-binding</keyword>
<keyword id="KW-0963">Cytoplasm</keyword>
<keyword id="KW-0206">Cytoskeleton</keyword>
<keyword id="KW-0378">Hydrolase</keyword>
<keyword id="KW-0488">Methylation</keyword>
<keyword id="KW-0547">Nucleotide-binding</keyword>
<accession>P86288</accession>
<proteinExistence type="evidence at protein level"/>
<gene>
    <name evidence="4" type="primary">ACT2</name>
    <name evidence="1" type="synonym">ACTII</name>
</gene>
<organism>
    <name type="scientific">Plasmodium falciparum (isolate HB3)</name>
    <dbReference type="NCBI Taxonomy" id="137071"/>
    <lineage>
        <taxon>Eukaryota</taxon>
        <taxon>Sar</taxon>
        <taxon>Alveolata</taxon>
        <taxon>Apicomplexa</taxon>
        <taxon>Aconoidasida</taxon>
        <taxon>Haemosporida</taxon>
        <taxon>Plasmodiidae</taxon>
        <taxon>Plasmodium</taxon>
        <taxon>Plasmodium (Laverania)</taxon>
    </lineage>
</organism>
<dbReference type="EC" id="3.6.4.-" evidence="1"/>
<dbReference type="EMBL" id="AANS01001772">
    <property type="status" value="NOT_ANNOTATED_CDS"/>
    <property type="molecule type" value="Genomic_DNA"/>
</dbReference>
<dbReference type="PDB" id="8CCN">
    <property type="method" value="EM"/>
    <property type="resolution" value="3.50 A"/>
    <property type="chains" value="A/B/C/D/E/F=1-376"/>
</dbReference>
<dbReference type="PDB" id="8CCO">
    <property type="method" value="EM"/>
    <property type="resolution" value="3.28 A"/>
    <property type="chains" value="A/B/C/D/E/F=1-376"/>
</dbReference>
<dbReference type="PDBsum" id="8CCN"/>
<dbReference type="PDBsum" id="8CCO"/>
<dbReference type="SMR" id="P86288"/>
<dbReference type="VEuPathDB" id="PlasmoDB:PfHB3_140018400"/>
<dbReference type="OMA" id="PNIMVGM"/>
<dbReference type="GO" id="GO:0005884">
    <property type="term" value="C:actin filament"/>
    <property type="evidence" value="ECO:0000250"/>
    <property type="project" value="UniProtKB"/>
</dbReference>
<dbReference type="GO" id="GO:0005737">
    <property type="term" value="C:cytoplasm"/>
    <property type="evidence" value="ECO:0007669"/>
    <property type="project" value="UniProtKB-SubCell"/>
</dbReference>
<dbReference type="GO" id="GO:0005524">
    <property type="term" value="F:ATP binding"/>
    <property type="evidence" value="ECO:0007669"/>
    <property type="project" value="UniProtKB-KW"/>
</dbReference>
<dbReference type="GO" id="GO:0016787">
    <property type="term" value="F:hydrolase activity"/>
    <property type="evidence" value="ECO:0007669"/>
    <property type="project" value="UniProtKB-KW"/>
</dbReference>
<dbReference type="GO" id="GO:0005200">
    <property type="term" value="F:structural constituent of cytoskeleton"/>
    <property type="evidence" value="ECO:0000250"/>
    <property type="project" value="UniProtKB"/>
</dbReference>
<dbReference type="GO" id="GO:0070360">
    <property type="term" value="P:symbiont-mediated actin polymerization-dependent cell-to-cell migration in host"/>
    <property type="evidence" value="ECO:0000250"/>
    <property type="project" value="UniProtKB"/>
</dbReference>
<dbReference type="CDD" id="cd10224">
    <property type="entry name" value="ASKHA_NBD_actin"/>
    <property type="match status" value="1"/>
</dbReference>
<dbReference type="FunFam" id="3.90.640.10:FF:000007">
    <property type="entry name" value="Actin like 7B"/>
    <property type="match status" value="1"/>
</dbReference>
<dbReference type="FunFam" id="3.30.420.40:FF:000291">
    <property type="entry name" value="Actin, alpha skeletal muscle"/>
    <property type="match status" value="1"/>
</dbReference>
<dbReference type="FunFam" id="3.30.420.40:FF:000501">
    <property type="entry name" value="Predicted protein"/>
    <property type="match status" value="1"/>
</dbReference>
<dbReference type="FunFam" id="3.30.420.40:FF:000058">
    <property type="entry name" value="Putative actin-related protein 5"/>
    <property type="match status" value="1"/>
</dbReference>
<dbReference type="Gene3D" id="3.30.420.40">
    <property type="match status" value="2"/>
</dbReference>
<dbReference type="Gene3D" id="3.90.640.10">
    <property type="entry name" value="Actin, Chain A, domain 4"/>
    <property type="match status" value="1"/>
</dbReference>
<dbReference type="InterPro" id="IPR004000">
    <property type="entry name" value="Actin"/>
</dbReference>
<dbReference type="InterPro" id="IPR020902">
    <property type="entry name" value="Actin/actin-like_CS"/>
</dbReference>
<dbReference type="InterPro" id="IPR004001">
    <property type="entry name" value="Actin_CS"/>
</dbReference>
<dbReference type="InterPro" id="IPR043129">
    <property type="entry name" value="ATPase_NBD"/>
</dbReference>
<dbReference type="PANTHER" id="PTHR11937">
    <property type="entry name" value="ACTIN"/>
    <property type="match status" value="1"/>
</dbReference>
<dbReference type="Pfam" id="PF00022">
    <property type="entry name" value="Actin"/>
    <property type="match status" value="1"/>
</dbReference>
<dbReference type="PRINTS" id="PR00190">
    <property type="entry name" value="ACTIN"/>
</dbReference>
<dbReference type="SMART" id="SM00268">
    <property type="entry name" value="ACTIN"/>
    <property type="match status" value="1"/>
</dbReference>
<dbReference type="SUPFAM" id="SSF53067">
    <property type="entry name" value="Actin-like ATPase domain"/>
    <property type="match status" value="2"/>
</dbReference>
<dbReference type="PROSITE" id="PS00406">
    <property type="entry name" value="ACTINS_1"/>
    <property type="match status" value="1"/>
</dbReference>
<dbReference type="PROSITE" id="PS00432">
    <property type="entry name" value="ACTINS_2"/>
    <property type="match status" value="1"/>
</dbReference>
<dbReference type="PROSITE" id="PS01132">
    <property type="entry name" value="ACTINS_ACT_LIKE"/>
    <property type="match status" value="1"/>
</dbReference>
<feature type="chain" id="PRO_0000376864" description="Actin-2">
    <location>
        <begin position="1"/>
        <end position="376"/>
    </location>
</feature>
<feature type="binding site" evidence="1">
    <location>
        <position position="14"/>
    </location>
    <ligand>
        <name>ATP</name>
        <dbReference type="ChEBI" id="CHEBI:30616"/>
    </ligand>
</feature>
<feature type="binding site" evidence="1">
    <location>
        <position position="15"/>
    </location>
    <ligand>
        <name>ATP</name>
        <dbReference type="ChEBI" id="CHEBI:30616"/>
    </ligand>
</feature>
<feature type="binding site" evidence="1">
    <location>
        <position position="16"/>
    </location>
    <ligand>
        <name>ATP</name>
        <dbReference type="ChEBI" id="CHEBI:30616"/>
    </ligand>
</feature>
<feature type="binding site" evidence="1">
    <location>
        <position position="18"/>
    </location>
    <ligand>
        <name>ATP</name>
        <dbReference type="ChEBI" id="CHEBI:30616"/>
    </ligand>
</feature>
<feature type="binding site" evidence="1">
    <location>
        <position position="157"/>
    </location>
    <ligand>
        <name>ATP</name>
        <dbReference type="ChEBI" id="CHEBI:30616"/>
    </ligand>
</feature>
<feature type="binding site" evidence="1">
    <location>
        <position position="158"/>
    </location>
    <ligand>
        <name>ATP</name>
        <dbReference type="ChEBI" id="CHEBI:30616"/>
    </ligand>
</feature>
<feature type="binding site" evidence="1">
    <location>
        <position position="159"/>
    </location>
    <ligand>
        <name>ATP</name>
        <dbReference type="ChEBI" id="CHEBI:30616"/>
    </ligand>
</feature>
<feature type="binding site" evidence="1">
    <location>
        <position position="213"/>
    </location>
    <ligand>
        <name>ATP</name>
        <dbReference type="ChEBI" id="CHEBI:30616"/>
    </ligand>
</feature>
<feature type="binding site" evidence="1">
    <location>
        <position position="303"/>
    </location>
    <ligand>
        <name>ATP</name>
        <dbReference type="ChEBI" id="CHEBI:30616"/>
    </ligand>
</feature>
<feature type="modified residue" description="Tele-methylhistidine" evidence="1">
    <location>
        <position position="73"/>
    </location>
</feature>
<feature type="strand" evidence="6">
    <location>
        <begin position="8"/>
        <end position="12"/>
    </location>
</feature>
<feature type="strand" evidence="6">
    <location>
        <begin position="14"/>
        <end position="21"/>
    </location>
</feature>
<feature type="strand" evidence="6">
    <location>
        <begin position="28"/>
        <end position="32"/>
    </location>
</feature>
<feature type="strand" evidence="6">
    <location>
        <begin position="35"/>
        <end position="38"/>
    </location>
</feature>
<feature type="helix" evidence="6">
    <location>
        <begin position="56"/>
        <end position="59"/>
    </location>
</feature>
<feature type="helix" evidence="6">
    <location>
        <begin position="62"/>
        <end position="64"/>
    </location>
</feature>
<feature type="strand" evidence="6">
    <location>
        <begin position="65"/>
        <end position="68"/>
    </location>
</feature>
<feature type="strand" evidence="6">
    <location>
        <begin position="70"/>
        <end position="72"/>
    </location>
</feature>
<feature type="strand" evidence="6">
    <location>
        <begin position="75"/>
        <end position="77"/>
    </location>
</feature>
<feature type="helix" evidence="6">
    <location>
        <begin position="79"/>
        <end position="91"/>
    </location>
</feature>
<feature type="strand" evidence="6">
    <location>
        <begin position="103"/>
        <end position="107"/>
    </location>
</feature>
<feature type="helix" evidence="6">
    <location>
        <begin position="113"/>
        <end position="125"/>
    </location>
</feature>
<feature type="strand" evidence="6">
    <location>
        <begin position="130"/>
        <end position="136"/>
    </location>
</feature>
<feature type="helix" evidence="6">
    <location>
        <begin position="137"/>
        <end position="144"/>
    </location>
</feature>
<feature type="strand" evidence="6">
    <location>
        <begin position="148"/>
        <end position="155"/>
    </location>
</feature>
<feature type="strand" evidence="6">
    <location>
        <begin position="160"/>
        <end position="166"/>
    </location>
</feature>
<feature type="helix" evidence="6">
    <location>
        <begin position="172"/>
        <end position="174"/>
    </location>
</feature>
<feature type="strand" evidence="6">
    <location>
        <begin position="176"/>
        <end position="178"/>
    </location>
</feature>
<feature type="helix" evidence="6">
    <location>
        <begin position="182"/>
        <end position="194"/>
    </location>
</feature>
<feature type="turn" evidence="6">
    <location>
        <begin position="195"/>
        <end position="197"/>
    </location>
</feature>
<feature type="helix" evidence="6">
    <location>
        <begin position="203"/>
        <end position="216"/>
    </location>
</feature>
<feature type="helix" evidence="6">
    <location>
        <begin position="223"/>
        <end position="232"/>
    </location>
</feature>
<feature type="helix" evidence="6">
    <location>
        <begin position="235"/>
        <end position="237"/>
    </location>
</feature>
<feature type="strand" evidence="6">
    <location>
        <begin position="239"/>
        <end position="242"/>
    </location>
</feature>
<feature type="strand" evidence="6">
    <location>
        <begin position="248"/>
        <end position="251"/>
    </location>
</feature>
<feature type="helix" evidence="6">
    <location>
        <begin position="254"/>
        <end position="257"/>
    </location>
</feature>
<feature type="helix" evidence="6">
    <location>
        <begin position="259"/>
        <end position="262"/>
    </location>
</feature>
<feature type="turn" evidence="6">
    <location>
        <begin position="265"/>
        <end position="269"/>
    </location>
</feature>
<feature type="helix" evidence="6">
    <location>
        <begin position="275"/>
        <end position="283"/>
    </location>
</feature>
<feature type="turn" evidence="6">
    <location>
        <begin position="288"/>
        <end position="290"/>
    </location>
</feature>
<feature type="helix" evidence="6">
    <location>
        <begin position="291"/>
        <end position="295"/>
    </location>
</feature>
<feature type="strand" evidence="6">
    <location>
        <begin position="298"/>
        <end position="303"/>
    </location>
</feature>
<feature type="strand" evidence="5">
    <location>
        <begin position="307"/>
        <end position="309"/>
    </location>
</feature>
<feature type="helix" evidence="6">
    <location>
        <begin position="310"/>
        <end position="319"/>
    </location>
</feature>
<feature type="helix" evidence="6">
    <location>
        <begin position="336"/>
        <end position="338"/>
    </location>
</feature>
<feature type="helix" evidence="6">
    <location>
        <begin position="339"/>
        <end position="348"/>
    </location>
</feature>
<feature type="helix" evidence="6">
    <location>
        <begin position="352"/>
        <end position="355"/>
    </location>
</feature>
<feature type="helix" evidence="6">
    <location>
        <begin position="360"/>
        <end position="366"/>
    </location>
</feature>
<feature type="helix" evidence="6">
    <location>
        <begin position="370"/>
        <end position="374"/>
    </location>
</feature>
<protein>
    <recommendedName>
        <fullName evidence="1">Actin-2</fullName>
        <ecNumber evidence="1">3.6.4.-</ecNumber>
    </recommendedName>
    <alternativeName>
        <fullName evidence="1">Actin II</fullName>
    </alternativeName>
</protein>
<evidence type="ECO:0000250" key="1">
    <source>
        <dbReference type="UniProtKB" id="Q4YU79"/>
    </source>
</evidence>
<evidence type="ECO:0000250" key="2">
    <source>
        <dbReference type="UniProtKB" id="Q8I4X0"/>
    </source>
</evidence>
<evidence type="ECO:0000255" key="3"/>
<evidence type="ECO:0000305" key="4"/>
<evidence type="ECO:0007829" key="5">
    <source>
        <dbReference type="PDB" id="8CCN"/>
    </source>
</evidence>
<evidence type="ECO:0007829" key="6">
    <source>
        <dbReference type="PDB" id="8CCO"/>
    </source>
</evidence>